<feature type="chain" id="PRO_0000187241" description="Ribonucleoside-diphosphate reductase large subunit">
    <location>
        <begin position="1"/>
        <end position="790"/>
    </location>
</feature>
<feature type="active site" description="Proton acceptor" evidence="1">
    <location>
        <position position="436"/>
    </location>
</feature>
<feature type="active site" description="Cysteine radical intermediate" evidence="1">
    <location>
        <position position="438"/>
    </location>
</feature>
<feature type="active site" description="Proton acceptor" evidence="1">
    <location>
        <position position="440"/>
    </location>
</feature>
<feature type="binding site" evidence="1">
    <location>
        <position position="208"/>
    </location>
    <ligand>
        <name>substrate</name>
    </ligand>
</feature>
<feature type="binding site" evidence="1">
    <location>
        <begin position="223"/>
        <end position="224"/>
    </location>
    <ligand>
        <name>substrate</name>
    </ligand>
</feature>
<feature type="binding site" evidence="1">
    <location>
        <position position="254"/>
    </location>
    <ligand>
        <name>substrate</name>
    </ligand>
</feature>
<feature type="binding site" evidence="1">
    <location>
        <begin position="436"/>
        <end position="440"/>
    </location>
    <ligand>
        <name>substrate</name>
    </ligand>
</feature>
<feature type="binding site" evidence="1">
    <location>
        <begin position="621"/>
        <end position="625"/>
    </location>
    <ligand>
        <name>substrate</name>
    </ligand>
</feature>
<feature type="site" description="Important for hydrogen atom transfer" evidence="1">
    <location>
        <position position="224"/>
    </location>
</feature>
<feature type="site" description="Important for hydrogen atom transfer" evidence="1">
    <location>
        <position position="453"/>
    </location>
</feature>
<feature type="site" description="Important for electron transfer" evidence="1">
    <location>
        <position position="765"/>
    </location>
</feature>
<feature type="site" description="Important for electron transfer" evidence="1">
    <location>
        <position position="766"/>
    </location>
</feature>
<feature type="site" description="Interacts with thioredoxin/glutaredoxin" evidence="1">
    <location>
        <position position="785"/>
    </location>
</feature>
<feature type="site" description="Interacts with thioredoxin/glutaredoxin" evidence="1">
    <location>
        <position position="788"/>
    </location>
</feature>
<feature type="disulfide bond" description="Redox-active" evidence="1">
    <location>
        <begin position="224"/>
        <end position="453"/>
    </location>
</feature>
<sequence length="790" mass="88399">MALNFLQSDCPLAIIQDVISRVDAISDYGYANELSTTLPPRPSRSQVLEYITRVVDTLKPRCRVDERLYVVCGELVHLRIRTRNVEDLKYWLNSTEIALNEIVEKDILDHLDFIQRTLHAFESSEYRELCALGLQSALKYEEMYLAKMRGGRIESMGQFFLRLATTATHYTMEEPAMARVLVSGEVGWTYIFKAYFTALAGQVLIPATPIMLFGGRDCGSLASCYLLNPRVTDMNSAMLALMEEAGPILCNRGGIGLSLQRFNTPPKEGCSRGVMALLKLIDSMTMAINSDGERPTGVCVYFEPWHADIRAILNMRGMLARDETVRCDNIFACMWTPDLFFDRYQRYLDGESGVMWTLFDDTASHLCHMYGKEFEEEYERLEQCGFGVDSIPIQDMAFIIVRSAVMTGSPFLMFKDACNKHYHFDLRRKGAIMGSNLCTEIIQHADETQNGVCNLASINLPKCLAIPPPHTAGVPYFDFAALGRAAATATIFVNSMMRAGTYPTVKSQRGVDENRSLGLGIQGLHTAFLMLDLDMASPEARQLNKQIAERLLLNSMKASATLCRLGMKPFKGFEDSKYSLGELPFDSYPGVTLANRNAWRRLRTEIKQHGLYNSQFVAYMPTVSSSQVTESSEGFSPVYTNLFSKVTATGEVLRPNLLLMRTIRSIFPRECARLQALSTLEMAQWSVVGAFGDLPVGHPLSKFKTAFEYDQRTLIDMCADRAPFVDQSQSMSLFITEPADGKLPASKIMSLLVHAYKRGLKTGMYYCKIKKATNNGVFVGGDLVCTSCSL</sequence>
<comment type="function">
    <text evidence="1">Ribonucleoside-diphosphate reductase holoenzyme provides the precursors necessary for viral DNA synthesis. Allows virus growth in non-dividing cells, as well as reactivation from latency in infected hosts. Catalyzes the biosynthesis of deoxyribonucleotides from the corresponding ribonucleotides.</text>
</comment>
<comment type="catalytic activity">
    <reaction evidence="1">
        <text>a 2'-deoxyribonucleoside 5'-diphosphate + [thioredoxin]-disulfide + H2O = a ribonucleoside 5'-diphosphate + [thioredoxin]-dithiol</text>
        <dbReference type="Rhea" id="RHEA:23252"/>
        <dbReference type="Rhea" id="RHEA-COMP:10698"/>
        <dbReference type="Rhea" id="RHEA-COMP:10700"/>
        <dbReference type="ChEBI" id="CHEBI:15377"/>
        <dbReference type="ChEBI" id="CHEBI:29950"/>
        <dbReference type="ChEBI" id="CHEBI:50058"/>
        <dbReference type="ChEBI" id="CHEBI:57930"/>
        <dbReference type="ChEBI" id="CHEBI:73316"/>
        <dbReference type="EC" id="1.17.4.1"/>
    </reaction>
</comment>
<comment type="subunit">
    <text evidence="1">Heterotetramer composed of a homodimer of the large subunit (R1) and a homodimer of the small subunit (R2). Larger multisubunit protein complex are also active, composed of (R1)n(R2)n.</text>
</comment>
<comment type="similarity">
    <text evidence="1">Belongs to the ribonucleoside diphosphate reductase large chain family.</text>
</comment>
<reference key="1">
    <citation type="journal article" date="1992" name="Virology">
        <title>The DNA sequence of equine herpesvirus-1.</title>
        <authorList>
            <person name="Telford E.A.R."/>
            <person name="Watson M.S."/>
            <person name="McBride K."/>
            <person name="Davison A.J."/>
        </authorList>
    </citation>
    <scope>NUCLEOTIDE SEQUENCE [LARGE SCALE GENOMIC DNA]</scope>
</reference>
<reference key="2">
    <citation type="journal article" date="2009" name="Trends Biochem. Sci.">
        <title>Tinkering with a viral ribonucleotide reductase.</title>
        <authorList>
            <person name="Lembo D."/>
            <person name="Brune W."/>
        </authorList>
    </citation>
    <scope>REVIEW</scope>
</reference>
<organismHost>
    <name type="scientific">Equus caballus</name>
    <name type="common">Horse</name>
    <dbReference type="NCBI Taxonomy" id="9796"/>
</organismHost>
<proteinExistence type="inferred from homology"/>
<name>RIR1_EHV1B</name>
<evidence type="ECO:0000255" key="1">
    <source>
        <dbReference type="HAMAP-Rule" id="MF_04026"/>
    </source>
</evidence>
<gene>
    <name evidence="1" type="primary">RIR1</name>
    <name type="ordered locus">21</name>
</gene>
<protein>
    <recommendedName>
        <fullName evidence="1">Ribonucleoside-diphosphate reductase large subunit</fullName>
        <shortName evidence="1">R1</shortName>
        <ecNumber evidence="1">1.17.4.1</ecNumber>
    </recommendedName>
    <alternativeName>
        <fullName evidence="1">Ribonucleotide reductase large subunit</fullName>
    </alternativeName>
</protein>
<keyword id="KW-0067">ATP-binding</keyword>
<keyword id="KW-1015">Disulfide bond</keyword>
<keyword id="KW-0235">DNA replication</keyword>
<keyword id="KW-0244">Early protein</keyword>
<keyword id="KW-0547">Nucleotide-binding</keyword>
<keyword id="KW-0560">Oxidoreductase</keyword>
<keyword id="KW-1185">Reference proteome</keyword>
<keyword id="KW-1251">Viral latency</keyword>
<keyword id="KW-1272">Viral reactivation from latency</keyword>
<organism>
    <name type="scientific">Equine herpesvirus 1 (strain Ab4p)</name>
    <name type="common">EHV-1</name>
    <name type="synonym">Equine abortion virus</name>
    <dbReference type="NCBI Taxonomy" id="31520"/>
    <lineage>
        <taxon>Viruses</taxon>
        <taxon>Duplodnaviria</taxon>
        <taxon>Heunggongvirae</taxon>
        <taxon>Peploviricota</taxon>
        <taxon>Herviviricetes</taxon>
        <taxon>Herpesvirales</taxon>
        <taxon>Orthoherpesviridae</taxon>
        <taxon>Alphaherpesvirinae</taxon>
        <taxon>Varicellovirus</taxon>
        <taxon>Varicellovirus equidalpha1</taxon>
        <taxon>Equid alphaherpesvirus 1</taxon>
    </lineage>
</organism>
<accession>P28846</accession>
<dbReference type="EC" id="1.17.4.1" evidence="1"/>
<dbReference type="EMBL" id="AY665713">
    <property type="protein sequence ID" value="AAT67278.1"/>
    <property type="molecule type" value="Genomic_DNA"/>
</dbReference>
<dbReference type="PIR" id="D36797">
    <property type="entry name" value="WMBEA2"/>
</dbReference>
<dbReference type="SMR" id="P28846"/>
<dbReference type="KEGG" id="vg:1487540"/>
<dbReference type="Proteomes" id="UP000001189">
    <property type="component" value="Segment"/>
</dbReference>
<dbReference type="GO" id="GO:0005524">
    <property type="term" value="F:ATP binding"/>
    <property type="evidence" value="ECO:0007669"/>
    <property type="project" value="UniProtKB-UniRule"/>
</dbReference>
<dbReference type="GO" id="GO:0004748">
    <property type="term" value="F:ribonucleoside-diphosphate reductase activity, thioredoxin disulfide as acceptor"/>
    <property type="evidence" value="ECO:0007669"/>
    <property type="project" value="UniProtKB-UniRule"/>
</dbReference>
<dbReference type="GO" id="GO:0009263">
    <property type="term" value="P:deoxyribonucleotide biosynthetic process"/>
    <property type="evidence" value="ECO:0007669"/>
    <property type="project" value="InterPro"/>
</dbReference>
<dbReference type="GO" id="GO:0006260">
    <property type="term" value="P:DNA replication"/>
    <property type="evidence" value="ECO:0007669"/>
    <property type="project" value="UniProtKB-KW"/>
</dbReference>
<dbReference type="GO" id="GO:0019046">
    <property type="term" value="P:release from viral latency"/>
    <property type="evidence" value="ECO:0007669"/>
    <property type="project" value="UniProtKB-KW"/>
</dbReference>
<dbReference type="Gene3D" id="3.20.70.20">
    <property type="match status" value="1"/>
</dbReference>
<dbReference type="HAMAP" id="MF_04026">
    <property type="entry name" value="HSV_RIR1"/>
    <property type="match status" value="1"/>
</dbReference>
<dbReference type="InterPro" id="IPR034717">
    <property type="entry name" value="HSV_RIR1"/>
</dbReference>
<dbReference type="InterPro" id="IPR013346">
    <property type="entry name" value="NrdE_NrdA_C"/>
</dbReference>
<dbReference type="InterPro" id="IPR000788">
    <property type="entry name" value="RNR_lg_C"/>
</dbReference>
<dbReference type="InterPro" id="IPR013509">
    <property type="entry name" value="RNR_lsu_N"/>
</dbReference>
<dbReference type="InterPro" id="IPR039718">
    <property type="entry name" value="Rrm1"/>
</dbReference>
<dbReference type="NCBIfam" id="TIGR02506">
    <property type="entry name" value="NrdE_NrdA"/>
    <property type="match status" value="1"/>
</dbReference>
<dbReference type="PANTHER" id="PTHR11573">
    <property type="entry name" value="RIBONUCLEOSIDE-DIPHOSPHATE REDUCTASE LARGE CHAIN"/>
    <property type="match status" value="1"/>
</dbReference>
<dbReference type="PANTHER" id="PTHR11573:SF6">
    <property type="entry name" value="RIBONUCLEOSIDE-DIPHOSPHATE REDUCTASE LARGE SUBUNIT"/>
    <property type="match status" value="1"/>
</dbReference>
<dbReference type="Pfam" id="PF02867">
    <property type="entry name" value="Ribonuc_red_lgC"/>
    <property type="match status" value="1"/>
</dbReference>
<dbReference type="Pfam" id="PF00317">
    <property type="entry name" value="Ribonuc_red_lgN"/>
    <property type="match status" value="1"/>
</dbReference>
<dbReference type="PRINTS" id="PR01183">
    <property type="entry name" value="RIBORDTASEM1"/>
</dbReference>
<dbReference type="SUPFAM" id="SSF51998">
    <property type="entry name" value="PFL-like glycyl radical enzymes"/>
    <property type="match status" value="1"/>
</dbReference>
<dbReference type="PROSITE" id="PS00089">
    <property type="entry name" value="RIBORED_LARGE"/>
    <property type="match status" value="1"/>
</dbReference>